<evidence type="ECO:0000255" key="1">
    <source>
        <dbReference type="HAMAP-Rule" id="MF_01006"/>
    </source>
</evidence>
<keyword id="KW-0046">Antibiotic resistance</keyword>
<keyword id="KW-0997">Cell inner membrane</keyword>
<keyword id="KW-1003">Cell membrane</keyword>
<keyword id="KW-0133">Cell shape</keyword>
<keyword id="KW-0961">Cell wall biogenesis/degradation</keyword>
<keyword id="KW-0378">Hydrolase</keyword>
<keyword id="KW-0472">Membrane</keyword>
<keyword id="KW-0573">Peptidoglycan synthesis</keyword>
<keyword id="KW-0812">Transmembrane</keyword>
<keyword id="KW-1133">Transmembrane helix</keyword>
<comment type="function">
    <text evidence="1">Catalyzes the dephosphorylation of undecaprenyl diphosphate (UPP). Confers resistance to bacitracin.</text>
</comment>
<comment type="catalytic activity">
    <reaction evidence="1">
        <text>di-trans,octa-cis-undecaprenyl diphosphate + H2O = di-trans,octa-cis-undecaprenyl phosphate + phosphate + H(+)</text>
        <dbReference type="Rhea" id="RHEA:28094"/>
        <dbReference type="ChEBI" id="CHEBI:15377"/>
        <dbReference type="ChEBI" id="CHEBI:15378"/>
        <dbReference type="ChEBI" id="CHEBI:43474"/>
        <dbReference type="ChEBI" id="CHEBI:58405"/>
        <dbReference type="ChEBI" id="CHEBI:60392"/>
        <dbReference type="EC" id="3.6.1.27"/>
    </reaction>
</comment>
<comment type="subcellular location">
    <subcellularLocation>
        <location evidence="1">Cell inner membrane</location>
        <topology evidence="1">Multi-pass membrane protein</topology>
    </subcellularLocation>
</comment>
<comment type="miscellaneous">
    <text>Bacitracin is thought to be involved in the inhibition of peptidoglycan synthesis by sequestering undecaprenyl diphosphate, thereby reducing the pool of lipid carrier available.</text>
</comment>
<comment type="similarity">
    <text evidence="1">Belongs to the UppP family.</text>
</comment>
<dbReference type="EC" id="3.6.1.27" evidence="1"/>
<dbReference type="EMBL" id="CP000814">
    <property type="protein sequence ID" value="ABV51793.1"/>
    <property type="molecule type" value="Genomic_DNA"/>
</dbReference>
<dbReference type="RefSeq" id="WP_002866361.1">
    <property type="nucleotide sequence ID" value="NC_009839.1"/>
</dbReference>
<dbReference type="SMR" id="A8FK06"/>
<dbReference type="KEGG" id="cju:C8J_0194"/>
<dbReference type="HOGENOM" id="CLU_060296_2_0_7"/>
<dbReference type="GO" id="GO:0005886">
    <property type="term" value="C:plasma membrane"/>
    <property type="evidence" value="ECO:0007669"/>
    <property type="project" value="UniProtKB-SubCell"/>
</dbReference>
<dbReference type="GO" id="GO:0050380">
    <property type="term" value="F:undecaprenyl-diphosphatase activity"/>
    <property type="evidence" value="ECO:0007669"/>
    <property type="project" value="UniProtKB-UniRule"/>
</dbReference>
<dbReference type="GO" id="GO:0071555">
    <property type="term" value="P:cell wall organization"/>
    <property type="evidence" value="ECO:0007669"/>
    <property type="project" value="UniProtKB-KW"/>
</dbReference>
<dbReference type="GO" id="GO:0009252">
    <property type="term" value="P:peptidoglycan biosynthetic process"/>
    <property type="evidence" value="ECO:0007669"/>
    <property type="project" value="UniProtKB-KW"/>
</dbReference>
<dbReference type="GO" id="GO:0008360">
    <property type="term" value="P:regulation of cell shape"/>
    <property type="evidence" value="ECO:0007669"/>
    <property type="project" value="UniProtKB-KW"/>
</dbReference>
<dbReference type="GO" id="GO:0046677">
    <property type="term" value="P:response to antibiotic"/>
    <property type="evidence" value="ECO:0007669"/>
    <property type="project" value="UniProtKB-UniRule"/>
</dbReference>
<dbReference type="HAMAP" id="MF_01006">
    <property type="entry name" value="Undec_diphosphatase"/>
    <property type="match status" value="1"/>
</dbReference>
<dbReference type="InterPro" id="IPR003824">
    <property type="entry name" value="UppP"/>
</dbReference>
<dbReference type="NCBIfam" id="NF001390">
    <property type="entry name" value="PRK00281.1-4"/>
    <property type="match status" value="1"/>
</dbReference>
<dbReference type="NCBIfam" id="TIGR00753">
    <property type="entry name" value="undec_PP_bacA"/>
    <property type="match status" value="1"/>
</dbReference>
<dbReference type="PANTHER" id="PTHR30622">
    <property type="entry name" value="UNDECAPRENYL-DIPHOSPHATASE"/>
    <property type="match status" value="1"/>
</dbReference>
<dbReference type="PANTHER" id="PTHR30622:SF3">
    <property type="entry name" value="UNDECAPRENYL-DIPHOSPHATASE"/>
    <property type="match status" value="1"/>
</dbReference>
<dbReference type="Pfam" id="PF02673">
    <property type="entry name" value="BacA"/>
    <property type="match status" value="1"/>
</dbReference>
<feature type="chain" id="PRO_1000072892" description="Undecaprenyl-diphosphatase">
    <location>
        <begin position="1"/>
        <end position="267"/>
    </location>
</feature>
<feature type="transmembrane region" description="Helical" evidence="1">
    <location>
        <begin position="7"/>
        <end position="29"/>
    </location>
</feature>
<feature type="transmembrane region" description="Helical" evidence="1">
    <location>
        <begin position="41"/>
        <end position="61"/>
    </location>
</feature>
<feature type="transmembrane region" description="Helical" evidence="1">
    <location>
        <begin position="69"/>
        <end position="89"/>
    </location>
</feature>
<feature type="transmembrane region" description="Helical" evidence="1">
    <location>
        <begin position="96"/>
        <end position="116"/>
    </location>
</feature>
<feature type="transmembrane region" description="Helical" evidence="1">
    <location>
        <begin position="173"/>
        <end position="193"/>
    </location>
</feature>
<feature type="transmembrane region" description="Helical" evidence="1">
    <location>
        <begin position="207"/>
        <end position="227"/>
    </location>
</feature>
<feature type="transmembrane region" description="Helical" evidence="1">
    <location>
        <begin position="239"/>
        <end position="259"/>
    </location>
</feature>
<proteinExistence type="inferred from homology"/>
<reference key="1">
    <citation type="journal article" date="2007" name="J. Bacteriol.">
        <title>The complete genome sequence of Campylobacter jejuni strain 81116 (NCTC11828).</title>
        <authorList>
            <person name="Pearson B.M."/>
            <person name="Gaskin D.J.H."/>
            <person name="Segers R.P.A.M."/>
            <person name="Wells J.M."/>
            <person name="Nuijten P.J.M."/>
            <person name="van Vliet A.H.M."/>
        </authorList>
    </citation>
    <scope>NUCLEOTIDE SEQUENCE [LARGE SCALE GENOMIC DNA]</scope>
    <source>
        <strain>81116 / NCTC 11828</strain>
    </source>
</reference>
<name>UPPP_CAMJ8</name>
<sequence length="267" mass="29603">MENLNALILGIIEGLTEFLPVSSTGHMILGTTILGIDIDEFWKSFLIIIQLGSILAVIFVFWRKLFQGLDIWLKLAAGFFPTGVIGLFVAKYLNALFNGWVVVGMLIFGGVVFILIELAHKNKQYRINSLEEISFKQAFCIGIFQSLAMIPGTSRSGASIIGGLLLGFNRKVAAEFSFLLAIPTMIIATAYSIYKEPELLSNANSLIPLGIGFITAFVVAVLVIKFFLKFISKFDFIPFGIYRIILGFVFFYLYYSGILNAGSEFKL</sequence>
<gene>
    <name evidence="1" type="primary">uppP</name>
    <name type="ordered locus">C8J_0194</name>
</gene>
<accession>A8FK06</accession>
<organism>
    <name type="scientific">Campylobacter jejuni subsp. jejuni serotype O:6 (strain 81116 / NCTC 11828)</name>
    <dbReference type="NCBI Taxonomy" id="407148"/>
    <lineage>
        <taxon>Bacteria</taxon>
        <taxon>Pseudomonadati</taxon>
        <taxon>Campylobacterota</taxon>
        <taxon>Epsilonproteobacteria</taxon>
        <taxon>Campylobacterales</taxon>
        <taxon>Campylobacteraceae</taxon>
        <taxon>Campylobacter</taxon>
    </lineage>
</organism>
<protein>
    <recommendedName>
        <fullName evidence="1">Undecaprenyl-diphosphatase</fullName>
        <ecNumber evidence="1">3.6.1.27</ecNumber>
    </recommendedName>
    <alternativeName>
        <fullName evidence="1">Bacitracin resistance protein</fullName>
    </alternativeName>
    <alternativeName>
        <fullName evidence="1">Undecaprenyl pyrophosphate phosphatase</fullName>
    </alternativeName>
</protein>